<keyword id="KW-0028">Amino-acid biosynthesis</keyword>
<keyword id="KW-0057">Aromatic amino acid biosynthesis</keyword>
<keyword id="KW-0963">Cytoplasm</keyword>
<keyword id="KW-0808">Transferase</keyword>
<gene>
    <name evidence="1" type="primary">aroA</name>
    <name type="ordered locus">Bcenmc03_1004</name>
</gene>
<proteinExistence type="inferred from homology"/>
<comment type="function">
    <text evidence="1">Catalyzes the transfer of the enolpyruvyl moiety of phosphoenolpyruvate (PEP) to the 5-hydroxyl of shikimate-3-phosphate (S3P) to produce enolpyruvyl shikimate-3-phosphate and inorganic phosphate.</text>
</comment>
<comment type="catalytic activity">
    <reaction evidence="1">
        <text>3-phosphoshikimate + phosphoenolpyruvate = 5-O-(1-carboxyvinyl)-3-phosphoshikimate + phosphate</text>
        <dbReference type="Rhea" id="RHEA:21256"/>
        <dbReference type="ChEBI" id="CHEBI:43474"/>
        <dbReference type="ChEBI" id="CHEBI:57701"/>
        <dbReference type="ChEBI" id="CHEBI:58702"/>
        <dbReference type="ChEBI" id="CHEBI:145989"/>
        <dbReference type="EC" id="2.5.1.19"/>
    </reaction>
    <physiologicalReaction direction="left-to-right" evidence="1">
        <dbReference type="Rhea" id="RHEA:21257"/>
    </physiologicalReaction>
</comment>
<comment type="pathway">
    <text evidence="1">Metabolic intermediate biosynthesis; chorismate biosynthesis; chorismate from D-erythrose 4-phosphate and phosphoenolpyruvate: step 6/7.</text>
</comment>
<comment type="subunit">
    <text evidence="1">Monomer.</text>
</comment>
<comment type="subcellular location">
    <subcellularLocation>
        <location evidence="1">Cytoplasm</location>
    </subcellularLocation>
</comment>
<comment type="similarity">
    <text evidence="1">Belongs to the EPSP synthase family.</text>
</comment>
<feature type="chain" id="PRO_1000099670" description="3-phosphoshikimate 1-carboxyvinyltransferase">
    <location>
        <begin position="1"/>
        <end position="434"/>
    </location>
</feature>
<feature type="active site" description="Proton acceptor" evidence="1">
    <location>
        <position position="320"/>
    </location>
</feature>
<feature type="binding site" evidence="1">
    <location>
        <position position="22"/>
    </location>
    <ligand>
        <name>3-phosphoshikimate</name>
        <dbReference type="ChEBI" id="CHEBI:145989"/>
    </ligand>
</feature>
<feature type="binding site" evidence="1">
    <location>
        <position position="22"/>
    </location>
    <ligand>
        <name>phosphoenolpyruvate</name>
        <dbReference type="ChEBI" id="CHEBI:58702"/>
    </ligand>
</feature>
<feature type="binding site" evidence="1">
    <location>
        <position position="23"/>
    </location>
    <ligand>
        <name>3-phosphoshikimate</name>
        <dbReference type="ChEBI" id="CHEBI:145989"/>
    </ligand>
</feature>
<feature type="binding site" evidence="1">
    <location>
        <position position="27"/>
    </location>
    <ligand>
        <name>3-phosphoshikimate</name>
        <dbReference type="ChEBI" id="CHEBI:145989"/>
    </ligand>
</feature>
<feature type="binding site" evidence="1">
    <location>
        <position position="93"/>
    </location>
    <ligand>
        <name>phosphoenolpyruvate</name>
        <dbReference type="ChEBI" id="CHEBI:58702"/>
    </ligand>
</feature>
<feature type="binding site" evidence="1">
    <location>
        <position position="121"/>
    </location>
    <ligand>
        <name>phosphoenolpyruvate</name>
        <dbReference type="ChEBI" id="CHEBI:58702"/>
    </ligand>
</feature>
<feature type="binding site" evidence="1">
    <location>
        <position position="168"/>
    </location>
    <ligand>
        <name>3-phosphoshikimate</name>
        <dbReference type="ChEBI" id="CHEBI:145989"/>
    </ligand>
</feature>
<feature type="binding site" evidence="1">
    <location>
        <position position="169"/>
    </location>
    <ligand>
        <name>3-phosphoshikimate</name>
        <dbReference type="ChEBI" id="CHEBI:145989"/>
    </ligand>
</feature>
<feature type="binding site" evidence="1">
    <location>
        <position position="170"/>
    </location>
    <ligand>
        <name>3-phosphoshikimate</name>
        <dbReference type="ChEBI" id="CHEBI:145989"/>
    </ligand>
</feature>
<feature type="binding site" evidence="1">
    <location>
        <position position="170"/>
    </location>
    <ligand>
        <name>phosphoenolpyruvate</name>
        <dbReference type="ChEBI" id="CHEBI:58702"/>
    </ligand>
</feature>
<feature type="binding site" evidence="1">
    <location>
        <position position="199"/>
    </location>
    <ligand>
        <name>3-phosphoshikimate</name>
        <dbReference type="ChEBI" id="CHEBI:145989"/>
    </ligand>
</feature>
<feature type="binding site" evidence="1">
    <location>
        <position position="320"/>
    </location>
    <ligand>
        <name>3-phosphoshikimate</name>
        <dbReference type="ChEBI" id="CHEBI:145989"/>
    </ligand>
</feature>
<feature type="binding site" evidence="1">
    <location>
        <position position="347"/>
    </location>
    <ligand>
        <name>3-phosphoshikimate</name>
        <dbReference type="ChEBI" id="CHEBI:145989"/>
    </ligand>
</feature>
<feature type="binding site" evidence="1">
    <location>
        <position position="351"/>
    </location>
    <ligand>
        <name>phosphoenolpyruvate</name>
        <dbReference type="ChEBI" id="CHEBI:58702"/>
    </ligand>
</feature>
<feature type="binding site" evidence="1">
    <location>
        <position position="394"/>
    </location>
    <ligand>
        <name>phosphoenolpyruvate</name>
        <dbReference type="ChEBI" id="CHEBI:58702"/>
    </ligand>
</feature>
<feature type="binding site" evidence="1">
    <location>
        <position position="419"/>
    </location>
    <ligand>
        <name>phosphoenolpyruvate</name>
        <dbReference type="ChEBI" id="CHEBI:58702"/>
    </ligand>
</feature>
<sequence length="434" mass="46320">MDYLDLGPYSSASGTVRLPGSKSISNRVLLLAALAEGETTITNLLDSDDTRVMLDALGKLGVKLARDGDTCVVTGTRGAFTAKTADLFLGNAGTAVRPLTAALAVNGGDYRVHGVPRMHERPIGDLVDGLRQIGAQIDYELNEGYPPLRIKPATISVDAPIRVRGDVSSQFLTALLMTLPLVKAKDGRTVVEVDGELISKPYIDITIRLMARFGVTVERDGWQRFVVPAGVRYKSPGRIMVEGDASSASYFLAAGALGGGPLRVEGVGRASIQGDVGFANALMQMGANVTMGDDWIDVRGIGHDHGKLEPIDMDFNLIPDAAMTIAVAALFANGTSTLRNIASWRVKETDRIAAMATELRKVGAIVEEGPDYLVVTPPEKLTPNAAIDTYDDHRMAMCFSLVSLGGVPVRINDPKCVGKTFPDYFDRFAALAKA</sequence>
<name>AROA_BURO0</name>
<protein>
    <recommendedName>
        <fullName evidence="1">3-phosphoshikimate 1-carboxyvinyltransferase</fullName>
        <ecNumber evidence="1">2.5.1.19</ecNumber>
    </recommendedName>
    <alternativeName>
        <fullName evidence="1">5-enolpyruvylshikimate-3-phosphate synthase</fullName>
        <shortName evidence="1">EPSP synthase</shortName>
        <shortName evidence="1">EPSPS</shortName>
    </alternativeName>
</protein>
<accession>B1JXR9</accession>
<reference key="1">
    <citation type="submission" date="2008-02" db="EMBL/GenBank/DDBJ databases">
        <title>Complete sequence of chromosome 1 of Burkholderia cenocepacia MC0-3.</title>
        <authorList>
            <person name="Copeland A."/>
            <person name="Lucas S."/>
            <person name="Lapidus A."/>
            <person name="Barry K."/>
            <person name="Bruce D."/>
            <person name="Goodwin L."/>
            <person name="Glavina del Rio T."/>
            <person name="Dalin E."/>
            <person name="Tice H."/>
            <person name="Pitluck S."/>
            <person name="Chain P."/>
            <person name="Malfatti S."/>
            <person name="Shin M."/>
            <person name="Vergez L."/>
            <person name="Schmutz J."/>
            <person name="Larimer F."/>
            <person name="Land M."/>
            <person name="Hauser L."/>
            <person name="Kyrpides N."/>
            <person name="Mikhailova N."/>
            <person name="Tiedje J."/>
            <person name="Richardson P."/>
        </authorList>
    </citation>
    <scope>NUCLEOTIDE SEQUENCE [LARGE SCALE GENOMIC DNA]</scope>
    <source>
        <strain>MC0-3</strain>
    </source>
</reference>
<organism>
    <name type="scientific">Burkholderia orbicola (strain MC0-3)</name>
    <dbReference type="NCBI Taxonomy" id="406425"/>
    <lineage>
        <taxon>Bacteria</taxon>
        <taxon>Pseudomonadati</taxon>
        <taxon>Pseudomonadota</taxon>
        <taxon>Betaproteobacteria</taxon>
        <taxon>Burkholderiales</taxon>
        <taxon>Burkholderiaceae</taxon>
        <taxon>Burkholderia</taxon>
        <taxon>Burkholderia cepacia complex</taxon>
        <taxon>Burkholderia orbicola</taxon>
    </lineage>
</organism>
<evidence type="ECO:0000255" key="1">
    <source>
        <dbReference type="HAMAP-Rule" id="MF_00210"/>
    </source>
</evidence>
<dbReference type="EC" id="2.5.1.19" evidence="1"/>
<dbReference type="EMBL" id="CP000958">
    <property type="protein sequence ID" value="ACA90181.1"/>
    <property type="molecule type" value="Genomic_DNA"/>
</dbReference>
<dbReference type="RefSeq" id="WP_012328122.1">
    <property type="nucleotide sequence ID" value="NC_010508.1"/>
</dbReference>
<dbReference type="SMR" id="B1JXR9"/>
<dbReference type="GeneID" id="83047797"/>
<dbReference type="KEGG" id="bcm:Bcenmc03_1004"/>
<dbReference type="HOGENOM" id="CLU_024321_0_0_4"/>
<dbReference type="UniPathway" id="UPA00053">
    <property type="reaction ID" value="UER00089"/>
</dbReference>
<dbReference type="Proteomes" id="UP000002169">
    <property type="component" value="Chromosome 1"/>
</dbReference>
<dbReference type="GO" id="GO:0005737">
    <property type="term" value="C:cytoplasm"/>
    <property type="evidence" value="ECO:0007669"/>
    <property type="project" value="UniProtKB-SubCell"/>
</dbReference>
<dbReference type="GO" id="GO:0003866">
    <property type="term" value="F:3-phosphoshikimate 1-carboxyvinyltransferase activity"/>
    <property type="evidence" value="ECO:0007669"/>
    <property type="project" value="UniProtKB-UniRule"/>
</dbReference>
<dbReference type="GO" id="GO:0008652">
    <property type="term" value="P:amino acid biosynthetic process"/>
    <property type="evidence" value="ECO:0007669"/>
    <property type="project" value="UniProtKB-KW"/>
</dbReference>
<dbReference type="GO" id="GO:0009073">
    <property type="term" value="P:aromatic amino acid family biosynthetic process"/>
    <property type="evidence" value="ECO:0007669"/>
    <property type="project" value="UniProtKB-KW"/>
</dbReference>
<dbReference type="GO" id="GO:0009423">
    <property type="term" value="P:chorismate biosynthetic process"/>
    <property type="evidence" value="ECO:0007669"/>
    <property type="project" value="UniProtKB-UniRule"/>
</dbReference>
<dbReference type="CDD" id="cd01556">
    <property type="entry name" value="EPSP_synthase"/>
    <property type="match status" value="1"/>
</dbReference>
<dbReference type="FunFam" id="3.65.10.10:FF:000003">
    <property type="entry name" value="3-phosphoshikimate 1-carboxyvinyltransferase"/>
    <property type="match status" value="1"/>
</dbReference>
<dbReference type="FunFam" id="3.65.10.10:FF:000004">
    <property type="entry name" value="3-phosphoshikimate 1-carboxyvinyltransferase"/>
    <property type="match status" value="1"/>
</dbReference>
<dbReference type="Gene3D" id="3.65.10.10">
    <property type="entry name" value="Enolpyruvate transferase domain"/>
    <property type="match status" value="2"/>
</dbReference>
<dbReference type="HAMAP" id="MF_00210">
    <property type="entry name" value="EPSP_synth"/>
    <property type="match status" value="1"/>
</dbReference>
<dbReference type="InterPro" id="IPR001986">
    <property type="entry name" value="Enolpyruvate_Tfrase_dom"/>
</dbReference>
<dbReference type="InterPro" id="IPR036968">
    <property type="entry name" value="Enolpyruvate_Tfrase_sf"/>
</dbReference>
<dbReference type="InterPro" id="IPR006264">
    <property type="entry name" value="EPSP_synthase"/>
</dbReference>
<dbReference type="InterPro" id="IPR023193">
    <property type="entry name" value="EPSP_synthase_CS"/>
</dbReference>
<dbReference type="InterPro" id="IPR013792">
    <property type="entry name" value="RNA3'P_cycl/enolpyr_Trfase_a/b"/>
</dbReference>
<dbReference type="NCBIfam" id="TIGR01356">
    <property type="entry name" value="aroA"/>
    <property type="match status" value="1"/>
</dbReference>
<dbReference type="PANTHER" id="PTHR21090">
    <property type="entry name" value="AROM/DEHYDROQUINATE SYNTHASE"/>
    <property type="match status" value="1"/>
</dbReference>
<dbReference type="PANTHER" id="PTHR21090:SF5">
    <property type="entry name" value="PENTAFUNCTIONAL AROM POLYPEPTIDE"/>
    <property type="match status" value="1"/>
</dbReference>
<dbReference type="Pfam" id="PF00275">
    <property type="entry name" value="EPSP_synthase"/>
    <property type="match status" value="1"/>
</dbReference>
<dbReference type="PIRSF" id="PIRSF000505">
    <property type="entry name" value="EPSPS"/>
    <property type="match status" value="1"/>
</dbReference>
<dbReference type="SUPFAM" id="SSF55205">
    <property type="entry name" value="EPT/RTPC-like"/>
    <property type="match status" value="1"/>
</dbReference>
<dbReference type="PROSITE" id="PS00104">
    <property type="entry name" value="EPSP_SYNTHASE_1"/>
    <property type="match status" value="1"/>
</dbReference>
<dbReference type="PROSITE" id="PS00885">
    <property type="entry name" value="EPSP_SYNTHASE_2"/>
    <property type="match status" value="1"/>
</dbReference>